<proteinExistence type="inferred from homology"/>
<sequence length="338" mass="36608">MTCTIVVGGQWGDEGKGKIISYLCKKDNPSIIARGGVGPNAGHTVEVDGEKYGIRMVPTGFPNVNAKLAVGAGVLTDPEVLLKEIQMLEKFNVGERMIIDFRCGIIEEIHKELDKSNEHLSKEIGSTGTGCGPANVDRAMRTLKQGKDVESISKYLGDVSEAVNEALEAGYNVLIEGTQGSLLSLFYGSYPYVTSKDTNAASFAADVGVGPTKIDEVVAVFKSYPTRVGEGPFPTEMSVEEAESLGVVEYGTVTGRRRRVGYFDHELAKKVCRLNGATQIAITCLDKYDNECYGITEYEKLSEKGKAFIKEVEEKVGVKVTLISTGPELTQTIDVRNK</sequence>
<keyword id="KW-0963">Cytoplasm</keyword>
<keyword id="KW-0342">GTP-binding</keyword>
<keyword id="KW-0436">Ligase</keyword>
<keyword id="KW-0460">Magnesium</keyword>
<keyword id="KW-0479">Metal-binding</keyword>
<keyword id="KW-0547">Nucleotide-binding</keyword>
<keyword id="KW-0658">Purine biosynthesis</keyword>
<protein>
    <recommendedName>
        <fullName evidence="1">Adenylosuccinate synthetase</fullName>
        <shortName evidence="1">AMPSase</shortName>
        <shortName evidence="1">AdSS</shortName>
        <ecNumber evidence="1">6.3.4.4</ecNumber>
    </recommendedName>
    <alternativeName>
        <fullName evidence="1">IMP--aspartate ligase</fullName>
    </alternativeName>
</protein>
<evidence type="ECO:0000255" key="1">
    <source>
        <dbReference type="HAMAP-Rule" id="MF_00011"/>
    </source>
</evidence>
<organism>
    <name type="scientific">Methanococcus maripaludis (strain C7 / ATCC BAA-1331)</name>
    <dbReference type="NCBI Taxonomy" id="426368"/>
    <lineage>
        <taxon>Archaea</taxon>
        <taxon>Methanobacteriati</taxon>
        <taxon>Methanobacteriota</taxon>
        <taxon>Methanomada group</taxon>
        <taxon>Methanococci</taxon>
        <taxon>Methanococcales</taxon>
        <taxon>Methanococcaceae</taxon>
        <taxon>Methanococcus</taxon>
    </lineage>
</organism>
<feature type="chain" id="PRO_1000000859" description="Adenylosuccinate synthetase">
    <location>
        <begin position="1"/>
        <end position="338"/>
    </location>
</feature>
<feature type="active site" description="Proton acceptor" evidence="1">
    <location>
        <position position="13"/>
    </location>
</feature>
<feature type="active site" description="Proton donor" evidence="1">
    <location>
        <position position="43"/>
    </location>
</feature>
<feature type="binding site" evidence="1">
    <location>
        <begin position="12"/>
        <end position="18"/>
    </location>
    <ligand>
        <name>GTP</name>
        <dbReference type="ChEBI" id="CHEBI:37565"/>
    </ligand>
</feature>
<feature type="binding site" description="in other chain" evidence="1">
    <location>
        <begin position="13"/>
        <end position="16"/>
    </location>
    <ligand>
        <name>IMP</name>
        <dbReference type="ChEBI" id="CHEBI:58053"/>
        <note>ligand shared between dimeric partners</note>
    </ligand>
</feature>
<feature type="binding site" evidence="1">
    <location>
        <position position="13"/>
    </location>
    <ligand>
        <name>Mg(2+)</name>
        <dbReference type="ChEBI" id="CHEBI:18420"/>
    </ligand>
</feature>
<feature type="binding site" description="in other chain" evidence="1">
    <location>
        <begin position="40"/>
        <end position="43"/>
    </location>
    <ligand>
        <name>IMP</name>
        <dbReference type="ChEBI" id="CHEBI:58053"/>
        <note>ligand shared between dimeric partners</note>
    </ligand>
</feature>
<feature type="binding site" evidence="1">
    <location>
        <begin position="42"/>
        <end position="44"/>
    </location>
    <ligand>
        <name>GTP</name>
        <dbReference type="ChEBI" id="CHEBI:37565"/>
    </ligand>
</feature>
<feature type="binding site" evidence="1">
    <location>
        <position position="42"/>
    </location>
    <ligand>
        <name>Mg(2+)</name>
        <dbReference type="ChEBI" id="CHEBI:18420"/>
    </ligand>
</feature>
<feature type="binding site" description="in other chain" evidence="1">
    <location>
        <position position="127"/>
    </location>
    <ligand>
        <name>IMP</name>
        <dbReference type="ChEBI" id="CHEBI:58053"/>
        <note>ligand shared between dimeric partners</note>
    </ligand>
</feature>
<feature type="binding site" evidence="1">
    <location>
        <position position="141"/>
    </location>
    <ligand>
        <name>IMP</name>
        <dbReference type="ChEBI" id="CHEBI:58053"/>
        <note>ligand shared between dimeric partners</note>
    </ligand>
</feature>
<feature type="binding site" description="in other chain" evidence="1">
    <location>
        <position position="179"/>
    </location>
    <ligand>
        <name>IMP</name>
        <dbReference type="ChEBI" id="CHEBI:58053"/>
        <note>ligand shared between dimeric partners</note>
    </ligand>
</feature>
<feature type="binding site" description="in other chain" evidence="1">
    <location>
        <position position="194"/>
    </location>
    <ligand>
        <name>IMP</name>
        <dbReference type="ChEBI" id="CHEBI:58053"/>
        <note>ligand shared between dimeric partners</note>
    </ligand>
</feature>
<feature type="binding site" evidence="1">
    <location>
        <begin position="252"/>
        <end position="258"/>
    </location>
    <ligand>
        <name>substrate</name>
    </ligand>
</feature>
<feature type="binding site" description="in other chain" evidence="1">
    <location>
        <position position="256"/>
    </location>
    <ligand>
        <name>IMP</name>
        <dbReference type="ChEBI" id="CHEBI:58053"/>
        <note>ligand shared between dimeric partners</note>
    </ligand>
</feature>
<feature type="binding site" evidence="1">
    <location>
        <position position="258"/>
    </location>
    <ligand>
        <name>GTP</name>
        <dbReference type="ChEBI" id="CHEBI:37565"/>
    </ligand>
</feature>
<feature type="binding site" evidence="1">
    <location>
        <begin position="284"/>
        <end position="286"/>
    </location>
    <ligand>
        <name>GTP</name>
        <dbReference type="ChEBI" id="CHEBI:37565"/>
    </ligand>
</feature>
<feature type="binding site" evidence="1">
    <location>
        <begin position="324"/>
        <end position="326"/>
    </location>
    <ligand>
        <name>GTP</name>
        <dbReference type="ChEBI" id="CHEBI:37565"/>
    </ligand>
</feature>
<gene>
    <name evidence="1" type="primary">purA</name>
    <name type="ordered locus">MmarC7_0677</name>
</gene>
<comment type="function">
    <text evidence="1">Plays an important role in the de novo pathway of purine nucleotide biosynthesis. Catalyzes the first committed step in the biosynthesis of AMP from IMP.</text>
</comment>
<comment type="catalytic activity">
    <reaction evidence="1">
        <text>IMP + L-aspartate + GTP = N(6)-(1,2-dicarboxyethyl)-AMP + GDP + phosphate + 2 H(+)</text>
        <dbReference type="Rhea" id="RHEA:15753"/>
        <dbReference type="ChEBI" id="CHEBI:15378"/>
        <dbReference type="ChEBI" id="CHEBI:29991"/>
        <dbReference type="ChEBI" id="CHEBI:37565"/>
        <dbReference type="ChEBI" id="CHEBI:43474"/>
        <dbReference type="ChEBI" id="CHEBI:57567"/>
        <dbReference type="ChEBI" id="CHEBI:58053"/>
        <dbReference type="ChEBI" id="CHEBI:58189"/>
        <dbReference type="EC" id="6.3.4.4"/>
    </reaction>
</comment>
<comment type="cofactor">
    <cofactor evidence="1">
        <name>Mg(2+)</name>
        <dbReference type="ChEBI" id="CHEBI:18420"/>
    </cofactor>
    <text evidence="1">Binds 1 Mg(2+) ion per subunit.</text>
</comment>
<comment type="pathway">
    <text evidence="1">Purine metabolism; AMP biosynthesis via de novo pathway; AMP from IMP: step 1/2.</text>
</comment>
<comment type="subunit">
    <text evidence="1">Homodimer.</text>
</comment>
<comment type="subcellular location">
    <subcellularLocation>
        <location evidence="1">Cytoplasm</location>
    </subcellularLocation>
</comment>
<comment type="similarity">
    <text evidence="1">Belongs to the adenylosuccinate synthetase family.</text>
</comment>
<reference key="1">
    <citation type="submission" date="2007-06" db="EMBL/GenBank/DDBJ databases">
        <title>Complete sequence of Methanococcus maripaludis C7.</title>
        <authorList>
            <consortium name="US DOE Joint Genome Institute"/>
            <person name="Copeland A."/>
            <person name="Lucas S."/>
            <person name="Lapidus A."/>
            <person name="Barry K."/>
            <person name="Glavina del Rio T."/>
            <person name="Dalin E."/>
            <person name="Tice H."/>
            <person name="Pitluck S."/>
            <person name="Clum A."/>
            <person name="Schmutz J."/>
            <person name="Larimer F."/>
            <person name="Land M."/>
            <person name="Hauser L."/>
            <person name="Kyrpides N."/>
            <person name="Anderson I."/>
            <person name="Sieprawska-Lupa M."/>
            <person name="Whitman W.B."/>
            <person name="Richardson P."/>
        </authorList>
    </citation>
    <scope>NUCLEOTIDE SEQUENCE [LARGE SCALE GENOMIC DNA]</scope>
    <source>
        <strain>C7 / ATCC BAA-1331</strain>
    </source>
</reference>
<accession>A6VH18</accession>
<dbReference type="EC" id="6.3.4.4" evidence="1"/>
<dbReference type="EMBL" id="CP000745">
    <property type="protein sequence ID" value="ABR65744.1"/>
    <property type="molecule type" value="Genomic_DNA"/>
</dbReference>
<dbReference type="SMR" id="A6VH18"/>
<dbReference type="STRING" id="426368.MmarC7_0677"/>
<dbReference type="KEGG" id="mmz:MmarC7_0677"/>
<dbReference type="eggNOG" id="arCOG04387">
    <property type="taxonomic scope" value="Archaea"/>
</dbReference>
<dbReference type="HOGENOM" id="CLU_029848_0_0_2"/>
<dbReference type="OrthoDB" id="372247at2157"/>
<dbReference type="UniPathway" id="UPA00075">
    <property type="reaction ID" value="UER00335"/>
</dbReference>
<dbReference type="GO" id="GO:0005737">
    <property type="term" value="C:cytoplasm"/>
    <property type="evidence" value="ECO:0007669"/>
    <property type="project" value="UniProtKB-SubCell"/>
</dbReference>
<dbReference type="GO" id="GO:0004019">
    <property type="term" value="F:adenylosuccinate synthase activity"/>
    <property type="evidence" value="ECO:0007669"/>
    <property type="project" value="UniProtKB-UniRule"/>
</dbReference>
<dbReference type="GO" id="GO:0005525">
    <property type="term" value="F:GTP binding"/>
    <property type="evidence" value="ECO:0007669"/>
    <property type="project" value="UniProtKB-UniRule"/>
</dbReference>
<dbReference type="GO" id="GO:0000287">
    <property type="term" value="F:magnesium ion binding"/>
    <property type="evidence" value="ECO:0007669"/>
    <property type="project" value="UniProtKB-UniRule"/>
</dbReference>
<dbReference type="GO" id="GO:0044208">
    <property type="term" value="P:'de novo' AMP biosynthetic process"/>
    <property type="evidence" value="ECO:0007669"/>
    <property type="project" value="UniProtKB-UniRule"/>
</dbReference>
<dbReference type="GO" id="GO:0046040">
    <property type="term" value="P:IMP metabolic process"/>
    <property type="evidence" value="ECO:0007669"/>
    <property type="project" value="TreeGrafter"/>
</dbReference>
<dbReference type="CDD" id="cd03108">
    <property type="entry name" value="AdSS"/>
    <property type="match status" value="1"/>
</dbReference>
<dbReference type="Gene3D" id="3.40.440.10">
    <property type="entry name" value="Adenylosuccinate Synthetase, subunit A, domain 1"/>
    <property type="match status" value="2"/>
</dbReference>
<dbReference type="Gene3D" id="1.10.300.10">
    <property type="entry name" value="Adenylosuccinate Synthetase, subunit A, domain 2"/>
    <property type="match status" value="1"/>
</dbReference>
<dbReference type="Gene3D" id="3.90.170.10">
    <property type="entry name" value="Adenylosuccinate Synthetase, subunit A, domain 3"/>
    <property type="match status" value="2"/>
</dbReference>
<dbReference type="HAMAP" id="MF_00011">
    <property type="entry name" value="Adenylosucc_synth"/>
    <property type="match status" value="1"/>
</dbReference>
<dbReference type="InterPro" id="IPR018220">
    <property type="entry name" value="Adenylosuccin_syn_GTP-bd"/>
</dbReference>
<dbReference type="InterPro" id="IPR042109">
    <property type="entry name" value="Adenylosuccinate_synth_dom1"/>
</dbReference>
<dbReference type="InterPro" id="IPR042110">
    <property type="entry name" value="Adenylosuccinate_synth_dom2"/>
</dbReference>
<dbReference type="InterPro" id="IPR042111">
    <property type="entry name" value="Adenylosuccinate_synth_dom3"/>
</dbReference>
<dbReference type="InterPro" id="IPR001114">
    <property type="entry name" value="Adenylosuccinate_synthetase"/>
</dbReference>
<dbReference type="InterPro" id="IPR027417">
    <property type="entry name" value="P-loop_NTPase"/>
</dbReference>
<dbReference type="NCBIfam" id="NF003295">
    <property type="entry name" value="PRK04293.1"/>
    <property type="match status" value="1"/>
</dbReference>
<dbReference type="PANTHER" id="PTHR11846">
    <property type="entry name" value="ADENYLOSUCCINATE SYNTHETASE"/>
    <property type="match status" value="1"/>
</dbReference>
<dbReference type="PANTHER" id="PTHR11846:SF0">
    <property type="entry name" value="ADENYLOSUCCINATE SYNTHETASE"/>
    <property type="match status" value="1"/>
</dbReference>
<dbReference type="Pfam" id="PF00709">
    <property type="entry name" value="Adenylsucc_synt"/>
    <property type="match status" value="2"/>
</dbReference>
<dbReference type="SMART" id="SM00788">
    <property type="entry name" value="Adenylsucc_synt"/>
    <property type="match status" value="1"/>
</dbReference>
<dbReference type="SUPFAM" id="SSF52540">
    <property type="entry name" value="P-loop containing nucleoside triphosphate hydrolases"/>
    <property type="match status" value="1"/>
</dbReference>
<dbReference type="PROSITE" id="PS01266">
    <property type="entry name" value="ADENYLOSUCCIN_SYN_1"/>
    <property type="match status" value="1"/>
</dbReference>
<name>PURA_METM7</name>